<comment type="function">
    <text evidence="1">The central subunit of the protein translocation channel SecYEG. Consists of two halves formed by TMs 1-5 and 6-10. These two domains form a lateral gate at the front which open onto the bilayer between TMs 2 and 7, and are clamped together by SecE at the back. The channel is closed by both a pore ring composed of hydrophobic SecY resides and a short helix (helix 2A) on the extracellular side of the membrane which forms a plug. The plug probably moves laterally to allow the channel to open. The ring and the pore may move independently.</text>
</comment>
<comment type="subunit">
    <text evidence="1">Component of the Sec protein translocase complex. Heterotrimer consisting of SecY, SecE and SecG subunits. The heterotrimers can form oligomers, although 1 heterotrimer is thought to be able to translocate proteins. Interacts with the ribosome. Interacts with SecDF, and other proteins may be involved. Interacts with SecA.</text>
</comment>
<comment type="subcellular location">
    <subcellularLocation>
        <location evidence="1">Cell membrane</location>
        <topology evidence="1">Multi-pass membrane protein</topology>
    </subcellularLocation>
</comment>
<comment type="similarity">
    <text evidence="1">Belongs to the SecY/SEC61-alpha family.</text>
</comment>
<reference key="1">
    <citation type="journal article" date="1992" name="Mol. Gen. Genet.">
        <title>Cloning and molecular characterization of the secY genes from Bacillus licheniformis and Staphylococcus carnosus: comparative analysis of nine members of the SecY family.</title>
        <authorList>
            <person name="Tschauder S."/>
            <person name="Driessen A.J.M."/>
            <person name="Freudl R."/>
        </authorList>
    </citation>
    <scope>NUCLEOTIDE SEQUENCE [GENOMIC DNA]</scope>
    <source>
        <strain>ATCC 14580 / DSM 13 / JCM 2505 / CCUG 7422 / NBRC 12200 / NCIMB 9375 / NCTC 10341 / NRRL NRS-1264 / Gibson 46</strain>
    </source>
</reference>
<reference key="2">
    <citation type="journal article" date="2004" name="J. Mol. Microbiol. Biotechnol.">
        <title>The complete genome sequence of Bacillus licheniformis DSM13, an organism with great industrial potential.</title>
        <authorList>
            <person name="Veith B."/>
            <person name="Herzberg C."/>
            <person name="Steckel S."/>
            <person name="Feesche J."/>
            <person name="Maurer K.H."/>
            <person name="Ehrenreich P."/>
            <person name="Baeumer S."/>
            <person name="Henne A."/>
            <person name="Liesegang H."/>
            <person name="Merkl R."/>
            <person name="Ehrenreich A."/>
            <person name="Gottschalk G."/>
        </authorList>
    </citation>
    <scope>NUCLEOTIDE SEQUENCE [LARGE SCALE GENOMIC DNA]</scope>
    <source>
        <strain>ATCC 14580 / DSM 13 / JCM 2505 / CCUG 7422 / NBRC 12200 / NCIMB 9375 / NCTC 10341 / NRRL NRS-1264 / Gibson 46</strain>
    </source>
</reference>
<reference key="3">
    <citation type="journal article" date="2004" name="Genome Biol.">
        <title>Complete genome sequence of the industrial bacterium Bacillus licheniformis and comparisons with closely related Bacillus species.</title>
        <authorList>
            <person name="Rey M.W."/>
            <person name="Ramaiya P."/>
            <person name="Nelson B.A."/>
            <person name="Brody-Karpin S.D."/>
            <person name="Zaretsky E.J."/>
            <person name="Tang M."/>
            <person name="Lopez de Leon A."/>
            <person name="Xiang H."/>
            <person name="Gusti V."/>
            <person name="Clausen I.G."/>
            <person name="Olsen P.B."/>
            <person name="Rasmussen M.D."/>
            <person name="Andersen J.T."/>
            <person name="Joergensen P.L."/>
            <person name="Larsen T.S."/>
            <person name="Sorokin A."/>
            <person name="Bolotin A."/>
            <person name="Lapidus A."/>
            <person name="Galleron N."/>
            <person name="Ehrlich S.D."/>
            <person name="Berka R.M."/>
        </authorList>
    </citation>
    <scope>NUCLEOTIDE SEQUENCE [LARGE SCALE GENOMIC DNA]</scope>
    <source>
        <strain>ATCC 14580 / DSM 13 / JCM 2505 / CCUG 7422 / NBRC 12200 / NCIMB 9375 / NCTC 10341 / NRRL NRS-1264 / Gibson 46</strain>
    </source>
</reference>
<name>SECY_BACLD</name>
<protein>
    <recommendedName>
        <fullName evidence="1">Protein translocase subunit SecY</fullName>
    </recommendedName>
</protein>
<accession>Q05207</accession>
<accession>Q65P87</accession>
<proteinExistence type="inferred from homology"/>
<sequence length="431" mass="47030">MFKTISNFMRVKDIRNKIIFTLLMLIVFRLGSFIPVPHVNTEVLKAQDQMSVFGILNTFGGGALFNFSILAMGIMPYITASIIIQLLQMDVVPKFTEWSKQGEVGRRKLAQFTRYFTIVLGFIQALGMSYGFNNMAGGALITDPGVGTYLLIAIVLTAGTAFLMWLGEQITSHGVGNGISIIIFAGIVAGIPQTINQIYAQQFVDAGDQLFLQIIKVVVILVAILAIVVGVIFIQQAVRKISIQYAKGSGRSPVPGGQSTHLPLKVNPAGVIPVIFAVAFITTPRTVATFFGSNDVTNWIQKTFDYTHPVGMGVYAALIIAFTYFYAFVQVNPEQMADNLKKQGGYIPGVRPGKMTQDRITSILYRLTFVGSIFLAVIAILPVLFVNIAGLPSSAQIGGTSLLIVIGVALETMKQLESQLVKRNYRGFMKH</sequence>
<dbReference type="EMBL" id="X70087">
    <property type="protein sequence ID" value="CAA49692.1"/>
    <property type="molecule type" value="Genomic_DNA"/>
</dbReference>
<dbReference type="EMBL" id="AE017333">
    <property type="protein sequence ID" value="AAU39127.1"/>
    <property type="molecule type" value="Genomic_DNA"/>
</dbReference>
<dbReference type="EMBL" id="CP000002">
    <property type="protein sequence ID" value="AAU21782.1"/>
    <property type="molecule type" value="Genomic_DNA"/>
</dbReference>
<dbReference type="PIR" id="S30116">
    <property type="entry name" value="S30116"/>
</dbReference>
<dbReference type="RefSeq" id="WP_003178368.1">
    <property type="nucleotide sequence ID" value="NC_006322.1"/>
</dbReference>
<dbReference type="SMR" id="Q05207"/>
<dbReference type="STRING" id="279010.BL01031"/>
<dbReference type="GeneID" id="92858883"/>
<dbReference type="KEGG" id="bld:BLi00153"/>
<dbReference type="KEGG" id="bli:BL01031"/>
<dbReference type="eggNOG" id="COG0201">
    <property type="taxonomic scope" value="Bacteria"/>
</dbReference>
<dbReference type="HOGENOM" id="CLU_030313_0_1_9"/>
<dbReference type="Proteomes" id="UP000000606">
    <property type="component" value="Chromosome"/>
</dbReference>
<dbReference type="GO" id="GO:0005886">
    <property type="term" value="C:plasma membrane"/>
    <property type="evidence" value="ECO:0007669"/>
    <property type="project" value="UniProtKB-SubCell"/>
</dbReference>
<dbReference type="GO" id="GO:0065002">
    <property type="term" value="P:intracellular protein transmembrane transport"/>
    <property type="evidence" value="ECO:0007669"/>
    <property type="project" value="UniProtKB-UniRule"/>
</dbReference>
<dbReference type="GO" id="GO:0006605">
    <property type="term" value="P:protein targeting"/>
    <property type="evidence" value="ECO:0007669"/>
    <property type="project" value="UniProtKB-UniRule"/>
</dbReference>
<dbReference type="GO" id="GO:0043952">
    <property type="term" value="P:protein transport by the Sec complex"/>
    <property type="evidence" value="ECO:0007669"/>
    <property type="project" value="UniProtKB-UniRule"/>
</dbReference>
<dbReference type="FunFam" id="1.10.3370.10:FF:000001">
    <property type="entry name" value="Preprotein translocase subunit SecY"/>
    <property type="match status" value="1"/>
</dbReference>
<dbReference type="Gene3D" id="1.10.3370.10">
    <property type="entry name" value="SecY subunit domain"/>
    <property type="match status" value="1"/>
</dbReference>
<dbReference type="HAMAP" id="MF_01465">
    <property type="entry name" value="SecY"/>
    <property type="match status" value="1"/>
</dbReference>
<dbReference type="InterPro" id="IPR026593">
    <property type="entry name" value="SecY"/>
</dbReference>
<dbReference type="InterPro" id="IPR002208">
    <property type="entry name" value="SecY/SEC61-alpha"/>
</dbReference>
<dbReference type="InterPro" id="IPR030659">
    <property type="entry name" value="SecY_CS"/>
</dbReference>
<dbReference type="InterPro" id="IPR023201">
    <property type="entry name" value="SecY_dom_sf"/>
</dbReference>
<dbReference type="NCBIfam" id="TIGR00967">
    <property type="entry name" value="3a0501s007"/>
    <property type="match status" value="1"/>
</dbReference>
<dbReference type="PANTHER" id="PTHR10906">
    <property type="entry name" value="SECY/SEC61-ALPHA FAMILY MEMBER"/>
    <property type="match status" value="1"/>
</dbReference>
<dbReference type="Pfam" id="PF00344">
    <property type="entry name" value="SecY"/>
    <property type="match status" value="1"/>
</dbReference>
<dbReference type="PIRSF" id="PIRSF004557">
    <property type="entry name" value="SecY"/>
    <property type="match status" value="1"/>
</dbReference>
<dbReference type="PRINTS" id="PR00303">
    <property type="entry name" value="SECYTRNLCASE"/>
</dbReference>
<dbReference type="SUPFAM" id="SSF103491">
    <property type="entry name" value="Preprotein translocase SecY subunit"/>
    <property type="match status" value="1"/>
</dbReference>
<dbReference type="PROSITE" id="PS00755">
    <property type="entry name" value="SECY_1"/>
    <property type="match status" value="1"/>
</dbReference>
<dbReference type="PROSITE" id="PS00756">
    <property type="entry name" value="SECY_2"/>
    <property type="match status" value="1"/>
</dbReference>
<keyword id="KW-1003">Cell membrane</keyword>
<keyword id="KW-0472">Membrane</keyword>
<keyword id="KW-0653">Protein transport</keyword>
<keyword id="KW-1185">Reference proteome</keyword>
<keyword id="KW-0811">Translocation</keyword>
<keyword id="KW-0812">Transmembrane</keyword>
<keyword id="KW-1133">Transmembrane helix</keyword>
<keyword id="KW-0813">Transport</keyword>
<feature type="chain" id="PRO_0000131708" description="Protein translocase subunit SecY">
    <location>
        <begin position="1"/>
        <end position="431"/>
    </location>
</feature>
<feature type="transmembrane region" description="Helical" evidence="1">
    <location>
        <begin position="18"/>
        <end position="38"/>
    </location>
</feature>
<feature type="transmembrane region" description="Helical" evidence="1">
    <location>
        <begin position="64"/>
        <end position="84"/>
    </location>
</feature>
<feature type="transmembrane region" description="Helical" evidence="1">
    <location>
        <begin position="116"/>
        <end position="136"/>
    </location>
</feature>
<feature type="transmembrane region" description="Helical" evidence="1">
    <location>
        <begin position="146"/>
        <end position="166"/>
    </location>
</feature>
<feature type="transmembrane region" description="Helical" evidence="1">
    <location>
        <begin position="175"/>
        <end position="195"/>
    </location>
</feature>
<feature type="transmembrane region" description="Helical" evidence="1">
    <location>
        <begin position="214"/>
        <end position="234"/>
    </location>
</feature>
<feature type="transmembrane region" description="Helical" evidence="1">
    <location>
        <begin position="262"/>
        <end position="282"/>
    </location>
</feature>
<feature type="transmembrane region" description="Helical" evidence="1">
    <location>
        <begin position="309"/>
        <end position="329"/>
    </location>
</feature>
<feature type="transmembrane region" description="Helical" evidence="1">
    <location>
        <begin position="369"/>
        <end position="389"/>
    </location>
</feature>
<feature type="transmembrane region" description="Helical" evidence="1">
    <location>
        <begin position="390"/>
        <end position="410"/>
    </location>
</feature>
<feature type="sequence conflict" description="In Ref. 1; CAA49692." evidence="2" ref="1">
    <original>F</original>
    <variation>I</variation>
    <location>
        <position position="328"/>
    </location>
</feature>
<organism>
    <name type="scientific">Bacillus licheniformis (strain ATCC 14580 / DSM 13 / JCM 2505 / CCUG 7422 / NBRC 12200 / NCIMB 9375 / NCTC 10341 / NRRL NRS-1264 / Gibson 46)</name>
    <dbReference type="NCBI Taxonomy" id="279010"/>
    <lineage>
        <taxon>Bacteria</taxon>
        <taxon>Bacillati</taxon>
        <taxon>Bacillota</taxon>
        <taxon>Bacilli</taxon>
        <taxon>Bacillales</taxon>
        <taxon>Bacillaceae</taxon>
        <taxon>Bacillus</taxon>
    </lineage>
</organism>
<evidence type="ECO:0000255" key="1">
    <source>
        <dbReference type="HAMAP-Rule" id="MF_01465"/>
    </source>
</evidence>
<evidence type="ECO:0000305" key="2"/>
<gene>
    <name evidence="1" type="primary">secY</name>
    <name type="ordered locus">BLi00153</name>
    <name type="ordered locus">BL01031</name>
</gene>